<gene>
    <name evidence="1" type="primary">uvrC</name>
    <name type="ordered locus">Saro_1060</name>
</gene>
<dbReference type="EMBL" id="CP000248">
    <property type="protein sequence ID" value="ABD25505.1"/>
    <property type="molecule type" value="Genomic_DNA"/>
</dbReference>
<dbReference type="SMR" id="Q2G9G8"/>
<dbReference type="STRING" id="279238.Saro_1060"/>
<dbReference type="KEGG" id="nar:Saro_1060"/>
<dbReference type="eggNOG" id="COG0322">
    <property type="taxonomic scope" value="Bacteria"/>
</dbReference>
<dbReference type="HOGENOM" id="CLU_014841_3_0_5"/>
<dbReference type="Proteomes" id="UP000009134">
    <property type="component" value="Chromosome"/>
</dbReference>
<dbReference type="GO" id="GO:0005737">
    <property type="term" value="C:cytoplasm"/>
    <property type="evidence" value="ECO:0007669"/>
    <property type="project" value="UniProtKB-SubCell"/>
</dbReference>
<dbReference type="GO" id="GO:0009380">
    <property type="term" value="C:excinuclease repair complex"/>
    <property type="evidence" value="ECO:0007669"/>
    <property type="project" value="InterPro"/>
</dbReference>
<dbReference type="GO" id="GO:0003677">
    <property type="term" value="F:DNA binding"/>
    <property type="evidence" value="ECO:0007669"/>
    <property type="project" value="UniProtKB-UniRule"/>
</dbReference>
<dbReference type="GO" id="GO:0009381">
    <property type="term" value="F:excinuclease ABC activity"/>
    <property type="evidence" value="ECO:0007669"/>
    <property type="project" value="UniProtKB-UniRule"/>
</dbReference>
<dbReference type="GO" id="GO:0006289">
    <property type="term" value="P:nucleotide-excision repair"/>
    <property type="evidence" value="ECO:0007669"/>
    <property type="project" value="UniProtKB-UniRule"/>
</dbReference>
<dbReference type="GO" id="GO:0009432">
    <property type="term" value="P:SOS response"/>
    <property type="evidence" value="ECO:0007669"/>
    <property type="project" value="UniProtKB-UniRule"/>
</dbReference>
<dbReference type="CDD" id="cd10434">
    <property type="entry name" value="GIY-YIG_UvrC_Cho"/>
    <property type="match status" value="1"/>
</dbReference>
<dbReference type="FunFam" id="3.40.1440.10:FF:000001">
    <property type="entry name" value="UvrABC system protein C"/>
    <property type="match status" value="1"/>
</dbReference>
<dbReference type="Gene3D" id="1.10.150.20">
    <property type="entry name" value="5' to 3' exonuclease, C-terminal subdomain"/>
    <property type="match status" value="1"/>
</dbReference>
<dbReference type="Gene3D" id="3.40.1440.10">
    <property type="entry name" value="GIY-YIG endonuclease"/>
    <property type="match status" value="1"/>
</dbReference>
<dbReference type="Gene3D" id="4.10.860.10">
    <property type="entry name" value="UVR domain"/>
    <property type="match status" value="1"/>
</dbReference>
<dbReference type="Gene3D" id="3.30.420.340">
    <property type="entry name" value="UvrC, RNAse H endonuclease domain"/>
    <property type="match status" value="1"/>
</dbReference>
<dbReference type="HAMAP" id="MF_00203">
    <property type="entry name" value="UvrC"/>
    <property type="match status" value="1"/>
</dbReference>
<dbReference type="InterPro" id="IPR000305">
    <property type="entry name" value="GIY-YIG_endonuc"/>
</dbReference>
<dbReference type="InterPro" id="IPR035901">
    <property type="entry name" value="GIY-YIG_endonuc_sf"/>
</dbReference>
<dbReference type="InterPro" id="IPR047296">
    <property type="entry name" value="GIY-YIG_UvrC_Cho"/>
</dbReference>
<dbReference type="InterPro" id="IPR003583">
    <property type="entry name" value="Hlx-hairpin-Hlx_DNA-bd_motif"/>
</dbReference>
<dbReference type="InterPro" id="IPR010994">
    <property type="entry name" value="RuvA_2-like"/>
</dbReference>
<dbReference type="InterPro" id="IPR001943">
    <property type="entry name" value="UVR_dom"/>
</dbReference>
<dbReference type="InterPro" id="IPR036876">
    <property type="entry name" value="UVR_dom_sf"/>
</dbReference>
<dbReference type="InterPro" id="IPR050066">
    <property type="entry name" value="UvrABC_protein_C"/>
</dbReference>
<dbReference type="InterPro" id="IPR004791">
    <property type="entry name" value="UvrC"/>
</dbReference>
<dbReference type="InterPro" id="IPR001162">
    <property type="entry name" value="UvrC_RNase_H_dom"/>
</dbReference>
<dbReference type="InterPro" id="IPR038476">
    <property type="entry name" value="UvrC_RNase_H_dom_sf"/>
</dbReference>
<dbReference type="NCBIfam" id="NF001824">
    <property type="entry name" value="PRK00558.1-5"/>
    <property type="match status" value="1"/>
</dbReference>
<dbReference type="NCBIfam" id="TIGR00194">
    <property type="entry name" value="uvrC"/>
    <property type="match status" value="1"/>
</dbReference>
<dbReference type="PANTHER" id="PTHR30562:SF1">
    <property type="entry name" value="UVRABC SYSTEM PROTEIN C"/>
    <property type="match status" value="1"/>
</dbReference>
<dbReference type="PANTHER" id="PTHR30562">
    <property type="entry name" value="UVRC/OXIDOREDUCTASE"/>
    <property type="match status" value="1"/>
</dbReference>
<dbReference type="Pfam" id="PF01541">
    <property type="entry name" value="GIY-YIG"/>
    <property type="match status" value="1"/>
</dbReference>
<dbReference type="Pfam" id="PF14520">
    <property type="entry name" value="HHH_5"/>
    <property type="match status" value="1"/>
</dbReference>
<dbReference type="Pfam" id="PF02151">
    <property type="entry name" value="UVR"/>
    <property type="match status" value="1"/>
</dbReference>
<dbReference type="Pfam" id="PF22920">
    <property type="entry name" value="UvrC_RNaseH"/>
    <property type="match status" value="1"/>
</dbReference>
<dbReference type="Pfam" id="PF08459">
    <property type="entry name" value="UvrC_RNaseH_dom"/>
    <property type="match status" value="1"/>
</dbReference>
<dbReference type="SMART" id="SM00465">
    <property type="entry name" value="GIYc"/>
    <property type="match status" value="1"/>
</dbReference>
<dbReference type="SMART" id="SM00278">
    <property type="entry name" value="HhH1"/>
    <property type="match status" value="2"/>
</dbReference>
<dbReference type="SUPFAM" id="SSF46600">
    <property type="entry name" value="C-terminal UvrC-binding domain of UvrB"/>
    <property type="match status" value="1"/>
</dbReference>
<dbReference type="SUPFAM" id="SSF82771">
    <property type="entry name" value="GIY-YIG endonuclease"/>
    <property type="match status" value="1"/>
</dbReference>
<dbReference type="SUPFAM" id="SSF47781">
    <property type="entry name" value="RuvA domain 2-like"/>
    <property type="match status" value="1"/>
</dbReference>
<dbReference type="PROSITE" id="PS50164">
    <property type="entry name" value="GIY_YIG"/>
    <property type="match status" value="1"/>
</dbReference>
<dbReference type="PROSITE" id="PS50151">
    <property type="entry name" value="UVR"/>
    <property type="match status" value="1"/>
</dbReference>
<dbReference type="PROSITE" id="PS50165">
    <property type="entry name" value="UVRC"/>
    <property type="match status" value="1"/>
</dbReference>
<feature type="chain" id="PRO_0000264920" description="UvrABC system protein C">
    <location>
        <begin position="1"/>
        <end position="658"/>
    </location>
</feature>
<feature type="domain" description="GIY-YIG" evidence="1">
    <location>
        <begin position="62"/>
        <end position="140"/>
    </location>
</feature>
<feature type="domain" description="UVR" evidence="1">
    <location>
        <begin position="250"/>
        <end position="285"/>
    </location>
</feature>
<reference key="1">
    <citation type="submission" date="2006-01" db="EMBL/GenBank/DDBJ databases">
        <title>Complete sequence of Novosphingobium aromaticivorans DSM 12444.</title>
        <authorList>
            <consortium name="US DOE Joint Genome Institute"/>
            <person name="Copeland A."/>
            <person name="Lucas S."/>
            <person name="Lapidus A."/>
            <person name="Barry K."/>
            <person name="Detter J.C."/>
            <person name="Glavina T."/>
            <person name="Hammon N."/>
            <person name="Israni S."/>
            <person name="Pitluck S."/>
            <person name="Chain P."/>
            <person name="Malfatti S."/>
            <person name="Shin M."/>
            <person name="Vergez L."/>
            <person name="Schmutz J."/>
            <person name="Larimer F."/>
            <person name="Land M."/>
            <person name="Kyrpides N."/>
            <person name="Ivanova N."/>
            <person name="Fredrickson J."/>
            <person name="Balkwill D."/>
            <person name="Romine M.F."/>
            <person name="Richardson P."/>
        </authorList>
    </citation>
    <scope>NUCLEOTIDE SEQUENCE [LARGE SCALE GENOMIC DNA]</scope>
    <source>
        <strain>ATCC 700278 / DSM 12444 / CCUG 56034 / CIP 105152 / NBRC 16084 / F199</strain>
    </source>
</reference>
<evidence type="ECO:0000255" key="1">
    <source>
        <dbReference type="HAMAP-Rule" id="MF_00203"/>
    </source>
</evidence>
<comment type="function">
    <text evidence="1">The UvrABC repair system catalyzes the recognition and processing of DNA lesions. UvrC both incises the 5' and 3' sides of the lesion. The N-terminal half is responsible for the 3' incision and the C-terminal half is responsible for the 5' incision.</text>
</comment>
<comment type="subunit">
    <text evidence="1">Interacts with UvrB in an incision complex.</text>
</comment>
<comment type="subcellular location">
    <subcellularLocation>
        <location evidence="1">Cytoplasm</location>
    </subcellularLocation>
</comment>
<comment type="similarity">
    <text evidence="1">Belongs to the UvrC family.</text>
</comment>
<organism>
    <name type="scientific">Novosphingobium aromaticivorans (strain ATCC 700278 / DSM 12444 / CCUG 56034 / CIP 105152 / NBRC 16084 / F199)</name>
    <dbReference type="NCBI Taxonomy" id="279238"/>
    <lineage>
        <taxon>Bacteria</taxon>
        <taxon>Pseudomonadati</taxon>
        <taxon>Pseudomonadota</taxon>
        <taxon>Alphaproteobacteria</taxon>
        <taxon>Sphingomonadales</taxon>
        <taxon>Sphingomonadaceae</taxon>
        <taxon>Novosphingobium</taxon>
    </lineage>
</organism>
<sequence>MRRAPERLSACHAMARKPQTPPDRETERFHEERAATTLRGADRPDIELGAGVIRETVQTLKPKPGVYRMLDARGDVLYVGKARALKNRVANYTQVERLPNRLRRMVSQTRSMTIVTTNSEAEALLLEAQLIKRFRPPYNVLLRDDKSFPFILLRGDHAFPRISKHRGARKAKGNYYGPFASAGSVNTTINALQKLFLLRSCNDGFMARRDRPCLLYQIRRCSAPCVGRISEADYGELVRQAKDFLGGKSGAVQREIEAQMHKAAEDLDFERAAMLRDRLRAATFIQGSQAINAEGVGNADVFAMATKGGQVAVQAFFIRGGQNWGHRAFFPSHTEGLSEEEVMTSFLAQFYEEVPPARLILVDRALPEADLLAEALCEAAGGKVEISVPQRGDRRRLMEQAQRNAVEALDRRMAESGTKAKVMRELAEFLELPEVPQRIEIYDNSHIQGTNALGAMVVAGPEGFVKGQYRKWNIKLAQTNDDFAMMREVMTRRFGRAQEEDPDRESGNWPDLVLIDGGKGQMSAVKEALGELGIEDVPLVAIAKGPHHGREGREVFHFPDGREKMLPVNSPVLFQLQVMRDEVHRFAIGAHRAKRSRAITASPLDEIPGIGPARKRALLLHFGTAGKVRAASLEDLQRAPGVSAAVAQTIYDFYHPSG</sequence>
<protein>
    <recommendedName>
        <fullName evidence="1">UvrABC system protein C</fullName>
        <shortName evidence="1">Protein UvrC</shortName>
    </recommendedName>
    <alternativeName>
        <fullName evidence="1">Excinuclease ABC subunit C</fullName>
    </alternativeName>
</protein>
<keyword id="KW-0963">Cytoplasm</keyword>
<keyword id="KW-0227">DNA damage</keyword>
<keyword id="KW-0228">DNA excision</keyword>
<keyword id="KW-0234">DNA repair</keyword>
<keyword id="KW-0267">Excision nuclease</keyword>
<keyword id="KW-1185">Reference proteome</keyword>
<keyword id="KW-0742">SOS response</keyword>
<accession>Q2G9G8</accession>
<proteinExistence type="inferred from homology"/>
<name>UVRC_NOVAD</name>